<protein>
    <recommendedName>
        <fullName evidence="1">Mitochondrial distribution and morphology protein 10</fullName>
    </recommendedName>
    <alternativeName>
        <fullName evidence="1">Mitochondrial inheritance component MDM10</fullName>
    </alternativeName>
</protein>
<feature type="chain" id="PRO_0000384177" description="Mitochondrial distribution and morphology protein 10">
    <location>
        <begin position="1"/>
        <end position="508"/>
    </location>
</feature>
<feature type="region of interest" description="Disordered" evidence="2">
    <location>
        <begin position="160"/>
        <end position="195"/>
    </location>
</feature>
<name>MDM10_CRYNJ</name>
<sequence length="508" mass="56456">MIGFSAFILRNYYAAIGWNEDNLYSSLTRTSSALLDFQLPQSLILQLANSPTPIFFTSYALDALPQLNGSISYITTSMPLDEIGSGRATAFKNVIERFRVFPPPKRPQPKDEVWLGGKRIEGRDYLLYSRLHLPSLHLSGLATTRLTPTLQAHLAFLSQPAHPTSTRPTPPQTPPSHTRQPSEPSTPAPSPTPGNVFISLQHDTGRYCGEYTYSVQDGMVGLRTLYNFGWHGDEESEVDKKERREREGKRIDEEEMMEGGLKGRFSAGGEVYFSAKQRSFGISTGLRFTTVPPTLPLPLNAPVPSPPTTLTLLYNPLIGFLSSAYSAQVSPTVALATRFGVNVYSYESDLSVGGEWWIGRRRGKRGLTTDAEPQLDAESRDPVVTGIEENRELTEKMAQRASLRQVTLRDEIGEDVHAEKELYSPIPVMTDVNAGELAQQISPRLQPQQDLDDERDGVLKARLSGNWQFALLYEARIRNCLVSAGVLADLTGRQHPIRSIGLEVQYFS</sequence>
<organism>
    <name type="scientific">Cryptococcus neoformans var. neoformans serotype D (strain JEC21 / ATCC MYA-565)</name>
    <name type="common">Filobasidiella neoformans</name>
    <dbReference type="NCBI Taxonomy" id="214684"/>
    <lineage>
        <taxon>Eukaryota</taxon>
        <taxon>Fungi</taxon>
        <taxon>Dikarya</taxon>
        <taxon>Basidiomycota</taxon>
        <taxon>Agaricomycotina</taxon>
        <taxon>Tremellomycetes</taxon>
        <taxon>Tremellales</taxon>
        <taxon>Cryptococcaceae</taxon>
        <taxon>Cryptococcus</taxon>
        <taxon>Cryptococcus neoformans species complex</taxon>
    </lineage>
</organism>
<evidence type="ECO:0000255" key="1">
    <source>
        <dbReference type="HAMAP-Rule" id="MF_03102"/>
    </source>
</evidence>
<evidence type="ECO:0000256" key="2">
    <source>
        <dbReference type="SAM" id="MobiDB-lite"/>
    </source>
</evidence>
<comment type="function">
    <text evidence="1">Component of the ERMES/MDM complex, which serves as a molecular tether to connect the endoplasmic reticulum and mitochondria. Components of this complex are involved in the control of mitochondrial shape and protein biogenesis and may function in phospholipid exchange. MDM10 is involved in the late assembly steps of the general translocase of the mitochondrial outer membrane (TOM complex). Functions in the TOM40-specific route of the assembly of outer membrane beta-barrel proteins, including the association of TOM40 with the receptor TOM22 and small TOM proteins. Can associate with the SAM(core) complex as well as the MDM12-MMM1 complex, both involved in late steps of the major beta-barrel assembly pathway, that is responsible for biogenesis of all outer membrane beta-barrel proteins. May act as a switch that shuttles between both complexes and channels precursor proteins into the TOM40-specific pathway. Plays a role in mitochondrial morphology and in the inheritance of mitochondria.</text>
</comment>
<comment type="subunit">
    <text evidence="1">Component of the ER-mitochondria encounter structure (ERMES) or MDM complex, composed of MMM1, MDM10, MDM12 and MDM34. Associates with the mitochondrial outer membrane sorting assembly machinery SAM(core) complex.</text>
</comment>
<comment type="subcellular location">
    <subcellularLocation>
        <location evidence="1">Mitochondrion outer membrane</location>
        <topology evidence="1">Multi-pass membrane protein</topology>
    </subcellularLocation>
    <text evidence="1">The ERMES/MDM complex localizes to a few discrete foci (around 10 per single cell), that represent mitochondria-endoplasmic reticulum junctions. These foci are often found next to mtDNA nucleoids.</text>
</comment>
<comment type="domain">
    <text>Lacks alpha-helical transmembrane segments, suggesting that it resides in the membrane via beta-sheet conformations similar to those predicted for other outer membrane proteins and porin.</text>
</comment>
<comment type="similarity">
    <text evidence="1">Belongs to the MDM10 family.</text>
</comment>
<dbReference type="EMBL" id="AE017356">
    <property type="protein sequence ID" value="AAW47220.1"/>
    <property type="molecule type" value="Genomic_DNA"/>
</dbReference>
<dbReference type="RefSeq" id="XP_568737.1">
    <property type="nucleotide sequence ID" value="XM_568737.1"/>
</dbReference>
<dbReference type="FunCoup" id="P0CO66">
    <property type="interactions" value="48"/>
</dbReference>
<dbReference type="STRING" id="214684.P0CO66"/>
<dbReference type="PaxDb" id="214684-P0CO66"/>
<dbReference type="EnsemblFungi" id="AAW47220">
    <property type="protein sequence ID" value="AAW47220"/>
    <property type="gene ID" value="CNN00750"/>
</dbReference>
<dbReference type="VEuPathDB" id="FungiDB:CNN00750"/>
<dbReference type="eggNOG" id="ENOG502QUN5">
    <property type="taxonomic scope" value="Eukaryota"/>
</dbReference>
<dbReference type="HOGENOM" id="CLU_026505_1_0_1"/>
<dbReference type="InParanoid" id="P0CO66"/>
<dbReference type="OMA" id="DALWGFR"/>
<dbReference type="OrthoDB" id="2103793at2759"/>
<dbReference type="Proteomes" id="UP000002149">
    <property type="component" value="Chromosome 14"/>
</dbReference>
<dbReference type="GO" id="GO:0032865">
    <property type="term" value="C:ERMES complex"/>
    <property type="evidence" value="ECO:0000318"/>
    <property type="project" value="GO_Central"/>
</dbReference>
<dbReference type="GO" id="GO:0001401">
    <property type="term" value="C:SAM complex"/>
    <property type="evidence" value="ECO:0000318"/>
    <property type="project" value="GO_Central"/>
</dbReference>
<dbReference type="GO" id="GO:0051654">
    <property type="term" value="P:establishment of mitochondrion localization"/>
    <property type="evidence" value="ECO:0000318"/>
    <property type="project" value="GO_Central"/>
</dbReference>
<dbReference type="GO" id="GO:0000002">
    <property type="term" value="P:mitochondrial genome maintenance"/>
    <property type="evidence" value="ECO:0007669"/>
    <property type="project" value="UniProtKB-UniRule"/>
</dbReference>
<dbReference type="GO" id="GO:0070096">
    <property type="term" value="P:mitochondrial outer membrane translocase complex assembly"/>
    <property type="evidence" value="ECO:0000318"/>
    <property type="project" value="GO_Central"/>
</dbReference>
<dbReference type="GO" id="GO:1990456">
    <property type="term" value="P:mitochondrion-endoplasmic reticulum membrane tethering"/>
    <property type="evidence" value="ECO:0000318"/>
    <property type="project" value="GO_Central"/>
</dbReference>
<dbReference type="GO" id="GO:0015914">
    <property type="term" value="P:phospholipid transport"/>
    <property type="evidence" value="ECO:0000318"/>
    <property type="project" value="GO_Central"/>
</dbReference>
<dbReference type="GO" id="GO:0045040">
    <property type="term" value="P:protein insertion into mitochondrial outer membrane"/>
    <property type="evidence" value="ECO:0000318"/>
    <property type="project" value="GO_Central"/>
</dbReference>
<dbReference type="HAMAP" id="MF_03102">
    <property type="entry name" value="Mdm10"/>
    <property type="match status" value="1"/>
</dbReference>
<dbReference type="InterPro" id="IPR027539">
    <property type="entry name" value="Mdm10"/>
</dbReference>
<dbReference type="PANTHER" id="PTHR28035">
    <property type="entry name" value="MITOCHONDRIAL DISTRIBUTION AND MORPHOLOGY PROTEIN 10"/>
    <property type="match status" value="1"/>
</dbReference>
<dbReference type="PANTHER" id="PTHR28035:SF1">
    <property type="entry name" value="MITOCHONDRIAL DISTRIBUTION AND MORPHOLOGY PROTEIN 10"/>
    <property type="match status" value="1"/>
</dbReference>
<dbReference type="Pfam" id="PF12519">
    <property type="entry name" value="MDM10"/>
    <property type="match status" value="1"/>
</dbReference>
<gene>
    <name evidence="1" type="primary">MDM10</name>
    <name type="ordered locus">CNN00750</name>
</gene>
<proteinExistence type="inferred from homology"/>
<keyword id="KW-0472">Membrane</keyword>
<keyword id="KW-0496">Mitochondrion</keyword>
<keyword id="KW-1000">Mitochondrion outer membrane</keyword>
<keyword id="KW-1185">Reference proteome</keyword>
<keyword id="KW-0812">Transmembrane</keyword>
<keyword id="KW-1134">Transmembrane beta strand</keyword>
<accession>P0CO66</accession>
<accession>Q55HP7</accession>
<accession>Q5K784</accession>
<reference key="1">
    <citation type="journal article" date="2005" name="Science">
        <title>The genome of the basidiomycetous yeast and human pathogen Cryptococcus neoformans.</title>
        <authorList>
            <person name="Loftus B.J."/>
            <person name="Fung E."/>
            <person name="Roncaglia P."/>
            <person name="Rowley D."/>
            <person name="Amedeo P."/>
            <person name="Bruno D."/>
            <person name="Vamathevan J."/>
            <person name="Miranda M."/>
            <person name="Anderson I.J."/>
            <person name="Fraser J.A."/>
            <person name="Allen J.E."/>
            <person name="Bosdet I.E."/>
            <person name="Brent M.R."/>
            <person name="Chiu R."/>
            <person name="Doering T.L."/>
            <person name="Donlin M.J."/>
            <person name="D'Souza C.A."/>
            <person name="Fox D.S."/>
            <person name="Grinberg V."/>
            <person name="Fu J."/>
            <person name="Fukushima M."/>
            <person name="Haas B.J."/>
            <person name="Huang J.C."/>
            <person name="Janbon G."/>
            <person name="Jones S.J.M."/>
            <person name="Koo H.L."/>
            <person name="Krzywinski M.I."/>
            <person name="Kwon-Chung K.J."/>
            <person name="Lengeler K.B."/>
            <person name="Maiti R."/>
            <person name="Marra M.A."/>
            <person name="Marra R.E."/>
            <person name="Mathewson C.A."/>
            <person name="Mitchell T.G."/>
            <person name="Pertea M."/>
            <person name="Riggs F.R."/>
            <person name="Salzberg S.L."/>
            <person name="Schein J.E."/>
            <person name="Shvartsbeyn A."/>
            <person name="Shin H."/>
            <person name="Shumway M."/>
            <person name="Specht C.A."/>
            <person name="Suh B.B."/>
            <person name="Tenney A."/>
            <person name="Utterback T.R."/>
            <person name="Wickes B.L."/>
            <person name="Wortman J.R."/>
            <person name="Wye N.H."/>
            <person name="Kronstad J.W."/>
            <person name="Lodge J.K."/>
            <person name="Heitman J."/>
            <person name="Davis R.W."/>
            <person name="Fraser C.M."/>
            <person name="Hyman R.W."/>
        </authorList>
    </citation>
    <scope>NUCLEOTIDE SEQUENCE [LARGE SCALE GENOMIC DNA]</scope>
    <source>
        <strain>JEC21 / ATCC MYA-565</strain>
    </source>
</reference>